<accession>B4JAL5</accession>
<comment type="function">
    <text evidence="1">Involved in endocytic trafficking by stabilizing organelles of the endocytic pathway. Probably acts as a cytoskeletal linker protein required to tether endosome vesicles to the cytoskeleton. Involved in modulation of endocytosis at stages required for down-regulation of membrane proteins that control synapse size. Not involved in synaptic vesicle recycling. Required in R7 cells for boss endocytosis into multivesicular bodies (MVBs). Has a role in regulating adult longevity.</text>
</comment>
<comment type="subunit">
    <text evidence="1">Homodimer. Interacts with microtubules via its N-terminus.</text>
</comment>
<comment type="subcellular location">
    <subcellularLocation>
        <location evidence="1">Cytoplasm</location>
        <location evidence="1">Cytoskeleton</location>
    </subcellularLocation>
    <subcellularLocation>
        <location evidence="1">Endosome</location>
    </subcellularLocation>
    <subcellularLocation>
        <location evidence="1">Synapse</location>
    </subcellularLocation>
    <text evidence="1">Enriched at neuromuscular synapses, in both presynaptic and postsynaptic regions.</text>
</comment>
<comment type="domain">
    <text evidence="1">The coiled coil domain mediates homodimerization.</text>
</comment>
<comment type="similarity">
    <text evidence="4">Belongs to the hook family.</text>
</comment>
<name>HOOK_DROGR</name>
<dbReference type="EMBL" id="CH916368">
    <property type="protein sequence ID" value="EDW02801.1"/>
    <property type="molecule type" value="Genomic_DNA"/>
</dbReference>
<dbReference type="SMR" id="B4JAL5"/>
<dbReference type="FunCoup" id="B4JAL5">
    <property type="interactions" value="513"/>
</dbReference>
<dbReference type="STRING" id="7222.B4JAL5"/>
<dbReference type="EnsemblMetazoa" id="FBtr0146303">
    <property type="protein sequence ID" value="FBpp0144795"/>
    <property type="gene ID" value="FBgn0118370"/>
</dbReference>
<dbReference type="EnsemblMetazoa" id="XM_001987898.2">
    <property type="protein sequence ID" value="XP_001987934.1"/>
    <property type="gene ID" value="LOC6561923"/>
</dbReference>
<dbReference type="GeneID" id="6561923"/>
<dbReference type="KEGG" id="dgr:6561923"/>
<dbReference type="CTD" id="35169"/>
<dbReference type="eggNOG" id="ENOG502QQM8">
    <property type="taxonomic scope" value="Eukaryota"/>
</dbReference>
<dbReference type="HOGENOM" id="CLU_011214_1_0_1"/>
<dbReference type="InParanoid" id="B4JAL5"/>
<dbReference type="OMA" id="DAKYRKC"/>
<dbReference type="OrthoDB" id="49395at2759"/>
<dbReference type="PhylomeDB" id="B4JAL5"/>
<dbReference type="Proteomes" id="UP000001070">
    <property type="component" value="Unassembled WGS sequence"/>
</dbReference>
<dbReference type="GO" id="GO:0005813">
    <property type="term" value="C:centrosome"/>
    <property type="evidence" value="ECO:0007669"/>
    <property type="project" value="TreeGrafter"/>
</dbReference>
<dbReference type="GO" id="GO:0005768">
    <property type="term" value="C:endosome"/>
    <property type="evidence" value="ECO:0000250"/>
    <property type="project" value="UniProtKB"/>
</dbReference>
<dbReference type="GO" id="GO:0005874">
    <property type="term" value="C:microtubule"/>
    <property type="evidence" value="ECO:0007669"/>
    <property type="project" value="UniProtKB-KW"/>
</dbReference>
<dbReference type="GO" id="GO:0045202">
    <property type="term" value="C:synapse"/>
    <property type="evidence" value="ECO:0000250"/>
    <property type="project" value="UniProtKB"/>
</dbReference>
<dbReference type="GO" id="GO:0051959">
    <property type="term" value="F:dynein light intermediate chain binding"/>
    <property type="evidence" value="ECO:0007669"/>
    <property type="project" value="TreeGrafter"/>
</dbReference>
<dbReference type="GO" id="GO:0008017">
    <property type="term" value="F:microtubule binding"/>
    <property type="evidence" value="ECO:0000250"/>
    <property type="project" value="UniProtKB"/>
</dbReference>
<dbReference type="GO" id="GO:0031122">
    <property type="term" value="P:cytoplasmic microtubule organization"/>
    <property type="evidence" value="ECO:0007669"/>
    <property type="project" value="InterPro"/>
</dbReference>
<dbReference type="GO" id="GO:0030705">
    <property type="term" value="P:cytoskeleton-dependent intracellular transport"/>
    <property type="evidence" value="ECO:0000250"/>
    <property type="project" value="UniProtKB"/>
</dbReference>
<dbReference type="GO" id="GO:0008340">
    <property type="term" value="P:determination of adult lifespan"/>
    <property type="evidence" value="ECO:0000250"/>
    <property type="project" value="UniProtKB"/>
</dbReference>
<dbReference type="GO" id="GO:0006897">
    <property type="term" value="P:endocytosis"/>
    <property type="evidence" value="ECO:0000250"/>
    <property type="project" value="UniProtKB"/>
</dbReference>
<dbReference type="CDD" id="cd22222">
    <property type="entry name" value="HkD_Hook"/>
    <property type="match status" value="1"/>
</dbReference>
<dbReference type="FunFam" id="1.10.418.10:FF:000024">
    <property type="entry name" value="Hook homolog 3 (Drosophila)"/>
    <property type="match status" value="1"/>
</dbReference>
<dbReference type="Gene3D" id="1.10.418.10">
    <property type="entry name" value="Calponin-like domain"/>
    <property type="match status" value="1"/>
</dbReference>
<dbReference type="InterPro" id="IPR001715">
    <property type="entry name" value="CH_dom"/>
</dbReference>
<dbReference type="InterPro" id="IPR036872">
    <property type="entry name" value="CH_dom_sf"/>
</dbReference>
<dbReference type="InterPro" id="IPR008636">
    <property type="entry name" value="Hook_C"/>
</dbReference>
<dbReference type="InterPro" id="IPR043936">
    <property type="entry name" value="HOOK_N"/>
</dbReference>
<dbReference type="PANTHER" id="PTHR18947">
    <property type="entry name" value="HOOK PROTEINS"/>
    <property type="match status" value="1"/>
</dbReference>
<dbReference type="PANTHER" id="PTHR18947:SF39">
    <property type="entry name" value="PROTEIN HOOK"/>
    <property type="match status" value="1"/>
</dbReference>
<dbReference type="Pfam" id="PF05622">
    <property type="entry name" value="HOOK"/>
    <property type="match status" value="1"/>
</dbReference>
<dbReference type="Pfam" id="PF19047">
    <property type="entry name" value="HOOK_N"/>
    <property type="match status" value="1"/>
</dbReference>
<dbReference type="SUPFAM" id="SSF116907">
    <property type="entry name" value="Hook domain"/>
    <property type="match status" value="1"/>
</dbReference>
<dbReference type="PROSITE" id="PS50021">
    <property type="entry name" value="CH"/>
    <property type="match status" value="1"/>
</dbReference>
<proteinExistence type="inferred from homology"/>
<evidence type="ECO:0000250" key="1">
    <source>
        <dbReference type="UniProtKB" id="Q24185"/>
    </source>
</evidence>
<evidence type="ECO:0000255" key="2"/>
<evidence type="ECO:0000255" key="3">
    <source>
        <dbReference type="PROSITE-ProRule" id="PRU00044"/>
    </source>
</evidence>
<evidence type="ECO:0000305" key="4"/>
<gene>
    <name evidence="1" type="primary">hook</name>
    <name evidence="1" type="synonym">hk</name>
    <name type="ORF">GH10889</name>
</gene>
<sequence length="683" mass="77879">MSTQNGMYYSLLEWFKTLNLNAPHANAEELADGVALAQALNQFAPESFSDSWLSKIKSSAAGSNWRLRMSNLKKVVEGVYEYYSDVLNYTLQHDFVKPDVQAIAEKCDLTELERLLQLVLGCAVNCAKKQSYICEIMCLEEELQANIMRALQELETSTRQTTEGGVVSSLSRNSLSGMLDGNAKALQSQMTEERDAMAQKCFETEKKMLLLIDEKTNLQQELQKIQQEFARLEHNTIGDDGVSLGPIQAGSVRYNELRRQLELVKEELLQSEGAREDLKIKAQQQETEMLHMQQRIDELMKSTAVLITLKDEVDVLRESTDKLKVCEAQLETYKKKLEEYNDLKKHVKMLEERSADYVQQNAQFEEDAKRYANTKGQIELFKKEIQDLHTKLDNESSKNVKLEFDNKNLDSKNLALQREKDNLLKERDNLREAFDELKCGQLTTNSGSLTGTTMSRELQPPAMMDKIQRLEAENKALREGQGGQTALAQLLDDANKRCENLREQMKTANERILSLSHASQSDDPILKENEFSKQIKQLMELNEQKTLQIEEFATQNSTMQCKITQLESSLNTREQEVMAYEVKYRKCVERAKEVIKNIDPRIASVLEANALEKSVDVIEEESKTKMSGMEEQLMATAFYRLGVNAQRDAVDSKLALLMGSGQTFLARQRQSAPRKSLTTMKSK</sequence>
<reference key="1">
    <citation type="journal article" date="2007" name="Nature">
        <title>Evolution of genes and genomes on the Drosophila phylogeny.</title>
        <authorList>
            <consortium name="Drosophila 12 genomes consortium"/>
        </authorList>
    </citation>
    <scope>NUCLEOTIDE SEQUENCE [LARGE SCALE GENOMIC DNA]</scope>
    <source>
        <strain>Tucson 15287-2541.00</strain>
    </source>
</reference>
<keyword id="KW-0175">Coiled coil</keyword>
<keyword id="KW-0963">Cytoplasm</keyword>
<keyword id="KW-0206">Cytoskeleton</keyword>
<keyword id="KW-0217">Developmental protein</keyword>
<keyword id="KW-0254">Endocytosis</keyword>
<keyword id="KW-0967">Endosome</keyword>
<keyword id="KW-0493">Microtubule</keyword>
<keyword id="KW-1185">Reference proteome</keyword>
<keyword id="KW-0770">Synapse</keyword>
<organism>
    <name type="scientific">Drosophila grimshawi</name>
    <name type="common">Hawaiian fruit fly</name>
    <name type="synonym">Idiomyia grimshawi</name>
    <dbReference type="NCBI Taxonomy" id="7222"/>
    <lineage>
        <taxon>Eukaryota</taxon>
        <taxon>Metazoa</taxon>
        <taxon>Ecdysozoa</taxon>
        <taxon>Arthropoda</taxon>
        <taxon>Hexapoda</taxon>
        <taxon>Insecta</taxon>
        <taxon>Pterygota</taxon>
        <taxon>Neoptera</taxon>
        <taxon>Endopterygota</taxon>
        <taxon>Diptera</taxon>
        <taxon>Brachycera</taxon>
        <taxon>Muscomorpha</taxon>
        <taxon>Ephydroidea</taxon>
        <taxon>Drosophilidae</taxon>
        <taxon>Drosophila</taxon>
        <taxon>Hawaiian Drosophila</taxon>
    </lineage>
</organism>
<protein>
    <recommendedName>
        <fullName>Protein hook</fullName>
    </recommendedName>
</protein>
<feature type="chain" id="PRO_0000379064" description="Protein hook">
    <location>
        <begin position="1"/>
        <end position="683"/>
    </location>
</feature>
<feature type="domain" description="Calponin-homology (CH)" evidence="3">
    <location>
        <begin position="5"/>
        <end position="123"/>
    </location>
</feature>
<feature type="coiled-coil region" evidence="2">
    <location>
        <begin position="135"/>
        <end position="440"/>
    </location>
</feature>
<feature type="coiled-coil region" evidence="2">
    <location>
        <begin position="484"/>
        <end position="594"/>
    </location>
</feature>